<evidence type="ECO:0000255" key="1">
    <source>
        <dbReference type="HAMAP-Rule" id="MF_00193"/>
    </source>
</evidence>
<name>NADE_BURO1</name>
<sequence length="282" mass="31001">MTSADYASRQRAIIAELNVAPHFDAEAEIARRIDFLAQYLRSTGLRTYVLGISGGVDSSTAGRLAQLSVERLRADGYDARFIAMRLPNGVQNDEEDAQRALAFVRADEVLTVDVKPAADAMLRSLVASGHAFETPAQQDFVHGNIKARERMIAQYAVAGARRGIVIGTDHAAESLMGFFTKFGDGGADILPLAGLSKRRVRGVARALGGEELIVMKVPTADLEELRPLRPDEHAYGVTYDEIDDFLEGKPVADRVYETVLRFYDGSRHKRALPYTMFDWPAA</sequence>
<dbReference type="EC" id="6.3.1.5" evidence="1"/>
<dbReference type="EMBL" id="CP000379">
    <property type="protein sequence ID" value="ABF77985.1"/>
    <property type="molecule type" value="Genomic_DNA"/>
</dbReference>
<dbReference type="SMR" id="Q1BQX0"/>
<dbReference type="HOGENOM" id="CLU_059327_3_0_4"/>
<dbReference type="UniPathway" id="UPA00253">
    <property type="reaction ID" value="UER00333"/>
</dbReference>
<dbReference type="GO" id="GO:0005737">
    <property type="term" value="C:cytoplasm"/>
    <property type="evidence" value="ECO:0007669"/>
    <property type="project" value="InterPro"/>
</dbReference>
<dbReference type="GO" id="GO:0005524">
    <property type="term" value="F:ATP binding"/>
    <property type="evidence" value="ECO:0007669"/>
    <property type="project" value="UniProtKB-UniRule"/>
</dbReference>
<dbReference type="GO" id="GO:0004359">
    <property type="term" value="F:glutaminase activity"/>
    <property type="evidence" value="ECO:0007669"/>
    <property type="project" value="InterPro"/>
</dbReference>
<dbReference type="GO" id="GO:0046872">
    <property type="term" value="F:metal ion binding"/>
    <property type="evidence" value="ECO:0007669"/>
    <property type="project" value="UniProtKB-KW"/>
</dbReference>
<dbReference type="GO" id="GO:0003952">
    <property type="term" value="F:NAD+ synthase (glutamine-hydrolyzing) activity"/>
    <property type="evidence" value="ECO:0007669"/>
    <property type="project" value="InterPro"/>
</dbReference>
<dbReference type="GO" id="GO:0008795">
    <property type="term" value="F:NAD+ synthase activity"/>
    <property type="evidence" value="ECO:0007669"/>
    <property type="project" value="UniProtKB-UniRule"/>
</dbReference>
<dbReference type="GO" id="GO:0009435">
    <property type="term" value="P:NAD biosynthetic process"/>
    <property type="evidence" value="ECO:0007669"/>
    <property type="project" value="UniProtKB-UniRule"/>
</dbReference>
<dbReference type="CDD" id="cd00553">
    <property type="entry name" value="NAD_synthase"/>
    <property type="match status" value="1"/>
</dbReference>
<dbReference type="Gene3D" id="3.40.50.620">
    <property type="entry name" value="HUPs"/>
    <property type="match status" value="1"/>
</dbReference>
<dbReference type="HAMAP" id="MF_00193">
    <property type="entry name" value="NadE_ammonia_dep"/>
    <property type="match status" value="1"/>
</dbReference>
<dbReference type="InterPro" id="IPR022310">
    <property type="entry name" value="NAD/GMP_synthase"/>
</dbReference>
<dbReference type="InterPro" id="IPR003694">
    <property type="entry name" value="NAD_synthase"/>
</dbReference>
<dbReference type="InterPro" id="IPR022926">
    <property type="entry name" value="NH(3)-dep_NAD(+)_synth"/>
</dbReference>
<dbReference type="InterPro" id="IPR014729">
    <property type="entry name" value="Rossmann-like_a/b/a_fold"/>
</dbReference>
<dbReference type="NCBIfam" id="TIGR00552">
    <property type="entry name" value="nadE"/>
    <property type="match status" value="1"/>
</dbReference>
<dbReference type="NCBIfam" id="NF001979">
    <property type="entry name" value="PRK00768.1"/>
    <property type="match status" value="1"/>
</dbReference>
<dbReference type="PANTHER" id="PTHR23090">
    <property type="entry name" value="NH 3 /GLUTAMINE-DEPENDENT NAD + SYNTHETASE"/>
    <property type="match status" value="1"/>
</dbReference>
<dbReference type="PANTHER" id="PTHR23090:SF7">
    <property type="entry name" value="NH(3)-DEPENDENT NAD(+) SYNTHETASE"/>
    <property type="match status" value="1"/>
</dbReference>
<dbReference type="Pfam" id="PF02540">
    <property type="entry name" value="NAD_synthase"/>
    <property type="match status" value="1"/>
</dbReference>
<dbReference type="SUPFAM" id="SSF52402">
    <property type="entry name" value="Adenine nucleotide alpha hydrolases-like"/>
    <property type="match status" value="1"/>
</dbReference>
<comment type="function">
    <text evidence="1">Catalyzes the ATP-dependent amidation of deamido-NAD to form NAD. Uses ammonia as a nitrogen source.</text>
</comment>
<comment type="catalytic activity">
    <reaction evidence="1">
        <text>deamido-NAD(+) + NH4(+) + ATP = AMP + diphosphate + NAD(+) + H(+)</text>
        <dbReference type="Rhea" id="RHEA:21188"/>
        <dbReference type="ChEBI" id="CHEBI:15378"/>
        <dbReference type="ChEBI" id="CHEBI:28938"/>
        <dbReference type="ChEBI" id="CHEBI:30616"/>
        <dbReference type="ChEBI" id="CHEBI:33019"/>
        <dbReference type="ChEBI" id="CHEBI:57540"/>
        <dbReference type="ChEBI" id="CHEBI:58437"/>
        <dbReference type="ChEBI" id="CHEBI:456215"/>
        <dbReference type="EC" id="6.3.1.5"/>
    </reaction>
</comment>
<comment type="pathway">
    <text evidence="1">Cofactor biosynthesis; NAD(+) biosynthesis; NAD(+) from deamido-NAD(+) (ammonia route): step 1/1.</text>
</comment>
<comment type="subunit">
    <text evidence="1">Homodimer.</text>
</comment>
<comment type="similarity">
    <text evidence="1">Belongs to the NAD synthetase family.</text>
</comment>
<proteinExistence type="inferred from homology"/>
<accession>Q1BQX0</accession>
<feature type="chain" id="PRO_1000099002" description="NH(3)-dependent NAD(+) synthetase">
    <location>
        <begin position="1"/>
        <end position="282"/>
    </location>
</feature>
<feature type="binding site" evidence="1">
    <location>
        <begin position="51"/>
        <end position="58"/>
    </location>
    <ligand>
        <name>ATP</name>
        <dbReference type="ChEBI" id="CHEBI:30616"/>
    </ligand>
</feature>
<feature type="binding site" evidence="1">
    <location>
        <position position="57"/>
    </location>
    <ligand>
        <name>Mg(2+)</name>
        <dbReference type="ChEBI" id="CHEBI:18420"/>
    </ligand>
</feature>
<feature type="binding site" evidence="1">
    <location>
        <position position="148"/>
    </location>
    <ligand>
        <name>deamido-NAD(+)</name>
        <dbReference type="ChEBI" id="CHEBI:58437"/>
    </ligand>
</feature>
<feature type="binding site" evidence="1">
    <location>
        <position position="168"/>
    </location>
    <ligand>
        <name>ATP</name>
        <dbReference type="ChEBI" id="CHEBI:30616"/>
    </ligand>
</feature>
<feature type="binding site" evidence="1">
    <location>
        <position position="173"/>
    </location>
    <ligand>
        <name>Mg(2+)</name>
        <dbReference type="ChEBI" id="CHEBI:18420"/>
    </ligand>
</feature>
<feature type="binding site" evidence="1">
    <location>
        <position position="181"/>
    </location>
    <ligand>
        <name>deamido-NAD(+)</name>
        <dbReference type="ChEBI" id="CHEBI:58437"/>
    </ligand>
</feature>
<feature type="binding site" evidence="1">
    <location>
        <position position="188"/>
    </location>
    <ligand>
        <name>deamido-NAD(+)</name>
        <dbReference type="ChEBI" id="CHEBI:58437"/>
    </ligand>
</feature>
<feature type="binding site" evidence="1">
    <location>
        <position position="197"/>
    </location>
    <ligand>
        <name>ATP</name>
        <dbReference type="ChEBI" id="CHEBI:30616"/>
    </ligand>
</feature>
<feature type="binding site" evidence="1">
    <location>
        <position position="219"/>
    </location>
    <ligand>
        <name>ATP</name>
        <dbReference type="ChEBI" id="CHEBI:30616"/>
    </ligand>
</feature>
<feature type="binding site" evidence="1">
    <location>
        <begin position="268"/>
        <end position="269"/>
    </location>
    <ligand>
        <name>deamido-NAD(+)</name>
        <dbReference type="ChEBI" id="CHEBI:58437"/>
    </ligand>
</feature>
<protein>
    <recommendedName>
        <fullName evidence="1">NH(3)-dependent NAD(+) synthetase</fullName>
        <ecNumber evidence="1">6.3.1.5</ecNumber>
    </recommendedName>
</protein>
<keyword id="KW-0067">ATP-binding</keyword>
<keyword id="KW-0436">Ligase</keyword>
<keyword id="KW-0460">Magnesium</keyword>
<keyword id="KW-0479">Metal-binding</keyword>
<keyword id="KW-0520">NAD</keyword>
<keyword id="KW-0547">Nucleotide-binding</keyword>
<gene>
    <name evidence="1" type="primary">nadE</name>
    <name type="ordered locus">Bcen_3089</name>
</gene>
<organism>
    <name type="scientific">Burkholderia orbicola (strain AU 1054)</name>
    <dbReference type="NCBI Taxonomy" id="331271"/>
    <lineage>
        <taxon>Bacteria</taxon>
        <taxon>Pseudomonadati</taxon>
        <taxon>Pseudomonadota</taxon>
        <taxon>Betaproteobacteria</taxon>
        <taxon>Burkholderiales</taxon>
        <taxon>Burkholderiaceae</taxon>
        <taxon>Burkholderia</taxon>
        <taxon>Burkholderia cepacia complex</taxon>
        <taxon>Burkholderia orbicola</taxon>
    </lineage>
</organism>
<reference key="1">
    <citation type="submission" date="2006-05" db="EMBL/GenBank/DDBJ databases">
        <title>Complete sequence of chromosome 2 of Burkholderia cenocepacia AU 1054.</title>
        <authorList>
            <consortium name="US DOE Joint Genome Institute"/>
            <person name="Copeland A."/>
            <person name="Lucas S."/>
            <person name="Lapidus A."/>
            <person name="Barry K."/>
            <person name="Detter J.C."/>
            <person name="Glavina del Rio T."/>
            <person name="Hammon N."/>
            <person name="Israni S."/>
            <person name="Dalin E."/>
            <person name="Tice H."/>
            <person name="Pitluck S."/>
            <person name="Chain P."/>
            <person name="Malfatti S."/>
            <person name="Shin M."/>
            <person name="Vergez L."/>
            <person name="Schmutz J."/>
            <person name="Larimer F."/>
            <person name="Land M."/>
            <person name="Hauser L."/>
            <person name="Kyrpides N."/>
            <person name="Lykidis A."/>
            <person name="LiPuma J.J."/>
            <person name="Konstantinidis K."/>
            <person name="Tiedje J.M."/>
            <person name="Richardson P."/>
        </authorList>
    </citation>
    <scope>NUCLEOTIDE SEQUENCE [LARGE SCALE GENOMIC DNA]</scope>
    <source>
        <strain>AU 1054</strain>
    </source>
</reference>